<organism>
    <name type="scientific">Streptococcus pneumoniae (strain JJA)</name>
    <dbReference type="NCBI Taxonomy" id="488222"/>
    <lineage>
        <taxon>Bacteria</taxon>
        <taxon>Bacillati</taxon>
        <taxon>Bacillota</taxon>
        <taxon>Bacilli</taxon>
        <taxon>Lactobacillales</taxon>
        <taxon>Streptococcaceae</taxon>
        <taxon>Streptococcus</taxon>
    </lineage>
</organism>
<comment type="function">
    <text evidence="1">Catalyzes the interconversion of L-alanine and D-alanine. May also act on other amino acids.</text>
</comment>
<comment type="catalytic activity">
    <reaction evidence="1">
        <text>L-alanine = D-alanine</text>
        <dbReference type="Rhea" id="RHEA:20249"/>
        <dbReference type="ChEBI" id="CHEBI:57416"/>
        <dbReference type="ChEBI" id="CHEBI:57972"/>
        <dbReference type="EC" id="5.1.1.1"/>
    </reaction>
</comment>
<comment type="cofactor">
    <cofactor evidence="1">
        <name>pyridoxal 5'-phosphate</name>
        <dbReference type="ChEBI" id="CHEBI:597326"/>
    </cofactor>
</comment>
<comment type="pathway">
    <text evidence="1">Amino-acid biosynthesis; D-alanine biosynthesis; D-alanine from L-alanine: step 1/1.</text>
</comment>
<comment type="similarity">
    <text evidence="1">Belongs to the alanine racemase family.</text>
</comment>
<sequence length="367" mass="39858">MKASPHRPTKALIHLGAIRQNIQQMGAHIPQGTLKLAVVKANAYGHGAVAVAKAIQDDVDGFCVSNIDEAIELRQAGLSKPILILGVSEIEAVALAKEYDFTLTVAGLEWIQALLDKEVDLTGLTVHLKIDSGMGRIGFREASEVEQAQDLLQQHGVCVEGIFTHFATADEESDDYFNAQLERFKTILASMKEVPELVHASNSATTLWHVETIFNAVRMGDAMYGLNPSGAVLDLPYDLIPALTLESALVHVKTVPAGACMGYGATYQADSEQVIATVPIGYADGWTRDMQNFSVLVDGQACPIVGRVSMDQITIRLPKLYPLGTKVTLIGSNGDKEITATQVATYRVTINYEVVCLLSDRIPREYY</sequence>
<proteinExistence type="inferred from homology"/>
<keyword id="KW-0413">Isomerase</keyword>
<keyword id="KW-0663">Pyridoxal phosphate</keyword>
<dbReference type="EC" id="5.1.1.1" evidence="1"/>
<dbReference type="EMBL" id="CP000919">
    <property type="protein sequence ID" value="ACO18990.1"/>
    <property type="molecule type" value="Genomic_DNA"/>
</dbReference>
<dbReference type="RefSeq" id="WP_000648075.1">
    <property type="nucleotide sequence ID" value="NC_012466.1"/>
</dbReference>
<dbReference type="SMR" id="C1CFR7"/>
<dbReference type="KEGG" id="sjj:SPJ_1591"/>
<dbReference type="HOGENOM" id="CLU_028393_2_1_9"/>
<dbReference type="UniPathway" id="UPA00042">
    <property type="reaction ID" value="UER00497"/>
</dbReference>
<dbReference type="Proteomes" id="UP000002206">
    <property type="component" value="Chromosome"/>
</dbReference>
<dbReference type="GO" id="GO:0005829">
    <property type="term" value="C:cytosol"/>
    <property type="evidence" value="ECO:0007669"/>
    <property type="project" value="TreeGrafter"/>
</dbReference>
<dbReference type="GO" id="GO:0008784">
    <property type="term" value="F:alanine racemase activity"/>
    <property type="evidence" value="ECO:0007669"/>
    <property type="project" value="UniProtKB-UniRule"/>
</dbReference>
<dbReference type="GO" id="GO:0030170">
    <property type="term" value="F:pyridoxal phosphate binding"/>
    <property type="evidence" value="ECO:0007669"/>
    <property type="project" value="UniProtKB-UniRule"/>
</dbReference>
<dbReference type="GO" id="GO:0030632">
    <property type="term" value="P:D-alanine biosynthetic process"/>
    <property type="evidence" value="ECO:0007669"/>
    <property type="project" value="UniProtKB-UniRule"/>
</dbReference>
<dbReference type="GO" id="GO:0009252">
    <property type="term" value="P:peptidoglycan biosynthetic process"/>
    <property type="evidence" value="ECO:0007669"/>
    <property type="project" value="TreeGrafter"/>
</dbReference>
<dbReference type="CDD" id="cd00430">
    <property type="entry name" value="PLPDE_III_AR"/>
    <property type="match status" value="1"/>
</dbReference>
<dbReference type="FunFam" id="2.40.37.10:FF:000006">
    <property type="entry name" value="Alanine racemase"/>
    <property type="match status" value="1"/>
</dbReference>
<dbReference type="FunFam" id="3.20.20.10:FF:000002">
    <property type="entry name" value="Alanine racemase"/>
    <property type="match status" value="1"/>
</dbReference>
<dbReference type="Gene3D" id="3.20.20.10">
    <property type="entry name" value="Alanine racemase"/>
    <property type="match status" value="1"/>
</dbReference>
<dbReference type="Gene3D" id="2.40.37.10">
    <property type="entry name" value="Lyase, Ornithine Decarboxylase, Chain A, domain 1"/>
    <property type="match status" value="1"/>
</dbReference>
<dbReference type="HAMAP" id="MF_01201">
    <property type="entry name" value="Ala_racemase"/>
    <property type="match status" value="1"/>
</dbReference>
<dbReference type="InterPro" id="IPR000821">
    <property type="entry name" value="Ala_racemase"/>
</dbReference>
<dbReference type="InterPro" id="IPR009006">
    <property type="entry name" value="Ala_racemase/Decarboxylase_C"/>
</dbReference>
<dbReference type="InterPro" id="IPR011079">
    <property type="entry name" value="Ala_racemase_C"/>
</dbReference>
<dbReference type="InterPro" id="IPR001608">
    <property type="entry name" value="Ala_racemase_N"/>
</dbReference>
<dbReference type="InterPro" id="IPR020622">
    <property type="entry name" value="Ala_racemase_pyridoxalP-BS"/>
</dbReference>
<dbReference type="InterPro" id="IPR029066">
    <property type="entry name" value="PLP-binding_barrel"/>
</dbReference>
<dbReference type="NCBIfam" id="TIGR00492">
    <property type="entry name" value="alr"/>
    <property type="match status" value="1"/>
</dbReference>
<dbReference type="PANTHER" id="PTHR30511">
    <property type="entry name" value="ALANINE RACEMASE"/>
    <property type="match status" value="1"/>
</dbReference>
<dbReference type="PANTHER" id="PTHR30511:SF0">
    <property type="entry name" value="ALANINE RACEMASE, CATABOLIC-RELATED"/>
    <property type="match status" value="1"/>
</dbReference>
<dbReference type="Pfam" id="PF00842">
    <property type="entry name" value="Ala_racemase_C"/>
    <property type="match status" value="1"/>
</dbReference>
<dbReference type="Pfam" id="PF01168">
    <property type="entry name" value="Ala_racemase_N"/>
    <property type="match status" value="1"/>
</dbReference>
<dbReference type="PRINTS" id="PR00992">
    <property type="entry name" value="ALARACEMASE"/>
</dbReference>
<dbReference type="SMART" id="SM01005">
    <property type="entry name" value="Ala_racemase_C"/>
    <property type="match status" value="1"/>
</dbReference>
<dbReference type="SUPFAM" id="SSF50621">
    <property type="entry name" value="Alanine racemase C-terminal domain-like"/>
    <property type="match status" value="1"/>
</dbReference>
<dbReference type="SUPFAM" id="SSF51419">
    <property type="entry name" value="PLP-binding barrel"/>
    <property type="match status" value="1"/>
</dbReference>
<dbReference type="PROSITE" id="PS00395">
    <property type="entry name" value="ALANINE_RACEMASE"/>
    <property type="match status" value="1"/>
</dbReference>
<name>ALR_STRZJ</name>
<gene>
    <name type="primary">alr</name>
    <name type="ordered locus">SPJ_1591</name>
</gene>
<accession>C1CFR7</accession>
<feature type="chain" id="PRO_1000164631" description="Alanine racemase">
    <location>
        <begin position="1"/>
        <end position="367"/>
    </location>
</feature>
<feature type="active site" description="Proton acceptor; specific for D-alanine" evidence="1">
    <location>
        <position position="40"/>
    </location>
</feature>
<feature type="active site" description="Proton acceptor; specific for L-alanine" evidence="1">
    <location>
        <position position="263"/>
    </location>
</feature>
<feature type="binding site" evidence="1">
    <location>
        <position position="136"/>
    </location>
    <ligand>
        <name>substrate</name>
    </ligand>
</feature>
<feature type="binding site" evidence="1">
    <location>
        <position position="310"/>
    </location>
    <ligand>
        <name>substrate</name>
    </ligand>
</feature>
<feature type="modified residue" description="N6-(pyridoxal phosphate)lysine" evidence="1">
    <location>
        <position position="40"/>
    </location>
</feature>
<protein>
    <recommendedName>
        <fullName evidence="1">Alanine racemase</fullName>
        <ecNumber evidence="1">5.1.1.1</ecNumber>
    </recommendedName>
</protein>
<evidence type="ECO:0000255" key="1">
    <source>
        <dbReference type="HAMAP-Rule" id="MF_01201"/>
    </source>
</evidence>
<reference key="1">
    <citation type="journal article" date="2010" name="Genome Biol.">
        <title>Structure and dynamics of the pan-genome of Streptococcus pneumoniae and closely related species.</title>
        <authorList>
            <person name="Donati C."/>
            <person name="Hiller N.L."/>
            <person name="Tettelin H."/>
            <person name="Muzzi A."/>
            <person name="Croucher N.J."/>
            <person name="Angiuoli S.V."/>
            <person name="Oggioni M."/>
            <person name="Dunning Hotopp J.C."/>
            <person name="Hu F.Z."/>
            <person name="Riley D.R."/>
            <person name="Covacci A."/>
            <person name="Mitchell T.J."/>
            <person name="Bentley S.D."/>
            <person name="Kilian M."/>
            <person name="Ehrlich G.D."/>
            <person name="Rappuoli R."/>
            <person name="Moxon E.R."/>
            <person name="Masignani V."/>
        </authorList>
    </citation>
    <scope>NUCLEOTIDE SEQUENCE [LARGE SCALE GENOMIC DNA]</scope>
    <source>
        <strain>JJA</strain>
    </source>
</reference>